<name>PQQC_PSEPK</name>
<proteinExistence type="inferred from homology"/>
<organism>
    <name type="scientific">Pseudomonas putida (strain ATCC 47054 / DSM 6125 / CFBP 8728 / NCIMB 11950 / KT2440)</name>
    <dbReference type="NCBI Taxonomy" id="160488"/>
    <lineage>
        <taxon>Bacteria</taxon>
        <taxon>Pseudomonadati</taxon>
        <taxon>Pseudomonadota</taxon>
        <taxon>Gammaproteobacteria</taxon>
        <taxon>Pseudomonadales</taxon>
        <taxon>Pseudomonadaceae</taxon>
        <taxon>Pseudomonas</taxon>
    </lineage>
</organism>
<evidence type="ECO:0000255" key="1">
    <source>
        <dbReference type="HAMAP-Rule" id="MF_00654"/>
    </source>
</evidence>
<sequence length="251" mass="29075">MSDALPMSPAEFEQALRAKGAYYHIHHPYHVAMYQGRATREQIQGWVANRFYYQVNIPMKDAAILANCPDREVRREWIQRLLDHDGAPGEDGGIEAWLRLGQAVGLDPDQLRSQELVLPGVRFAVDAYVNFARRASWQEAASSSLTELFAPQIHQSRLDSWPQHYPWIDPAGYEYFRTRLGQARRDVEHGLAITLQHYTTRAGQERMLEILQFKLDILWSMLDAMSMAYELNRPPYHSVTQERVWHKGITL</sequence>
<comment type="function">
    <text evidence="1">Ring cyclization and eight-electron oxidation of 3a-(2-amino-2-carboxyethyl)-4,5-dioxo-4,5,6,7,8,9-hexahydroquinoline-7,9-dicarboxylic-acid to PQQ.</text>
</comment>
<comment type="catalytic activity">
    <reaction evidence="1">
        <text>6-(2-amino-2-carboxyethyl)-7,8-dioxo-1,2,3,4,7,8-hexahydroquinoline-2,4-dicarboxylate + 3 O2 = pyrroloquinoline quinone + 2 H2O2 + 2 H2O + H(+)</text>
        <dbReference type="Rhea" id="RHEA:10692"/>
        <dbReference type="ChEBI" id="CHEBI:15377"/>
        <dbReference type="ChEBI" id="CHEBI:15378"/>
        <dbReference type="ChEBI" id="CHEBI:15379"/>
        <dbReference type="ChEBI" id="CHEBI:16240"/>
        <dbReference type="ChEBI" id="CHEBI:58442"/>
        <dbReference type="ChEBI" id="CHEBI:58778"/>
        <dbReference type="EC" id="1.3.3.11"/>
    </reaction>
</comment>
<comment type="pathway">
    <text evidence="1">Cofactor biosynthesis; pyrroloquinoline quinone biosynthesis.</text>
</comment>
<comment type="similarity">
    <text evidence="1">Belongs to the PqqC family.</text>
</comment>
<protein>
    <recommendedName>
        <fullName evidence="1">Pyrroloquinoline-quinone synthase</fullName>
        <ecNumber evidence="1">1.3.3.11</ecNumber>
    </recommendedName>
    <alternativeName>
        <fullName evidence="1">Coenzyme PQQ synthesis protein C</fullName>
    </alternativeName>
    <alternativeName>
        <fullName evidence="1">Pyrroloquinoline quinone biosynthesis protein C</fullName>
    </alternativeName>
</protein>
<accession>Q88QV6</accession>
<feature type="chain" id="PRO_0000219984" description="Pyrroloquinoline-quinone synthase">
    <location>
        <begin position="1"/>
        <end position="251"/>
    </location>
</feature>
<gene>
    <name evidence="1" type="primary">pqqC</name>
    <name type="ordered locus">PP_0378</name>
</gene>
<dbReference type="EC" id="1.3.3.11" evidence="1"/>
<dbReference type="EMBL" id="AE015451">
    <property type="protein sequence ID" value="AAN66009.1"/>
    <property type="molecule type" value="Genomic_DNA"/>
</dbReference>
<dbReference type="RefSeq" id="NP_742545.1">
    <property type="nucleotide sequence ID" value="NC_002947.4"/>
</dbReference>
<dbReference type="RefSeq" id="WP_003255592.1">
    <property type="nucleotide sequence ID" value="NZ_CP169744.1"/>
</dbReference>
<dbReference type="SMR" id="Q88QV6"/>
<dbReference type="STRING" id="160488.PP_0378"/>
<dbReference type="PaxDb" id="160488-PP_0378"/>
<dbReference type="GeneID" id="97165894"/>
<dbReference type="KEGG" id="ppu:PP_0378"/>
<dbReference type="PATRIC" id="fig|160488.4.peg.408"/>
<dbReference type="eggNOG" id="COG5424">
    <property type="taxonomic scope" value="Bacteria"/>
</dbReference>
<dbReference type="HOGENOM" id="CLU_080136_0_0_6"/>
<dbReference type="OrthoDB" id="9800756at2"/>
<dbReference type="PhylomeDB" id="Q88QV6"/>
<dbReference type="BioCyc" id="PPUT160488:G1G01-413-MONOMER"/>
<dbReference type="UniPathway" id="UPA00539"/>
<dbReference type="Proteomes" id="UP000000556">
    <property type="component" value="Chromosome"/>
</dbReference>
<dbReference type="GO" id="GO:0033732">
    <property type="term" value="F:pyrroloquinoline-quinone synthase activity"/>
    <property type="evidence" value="ECO:0007669"/>
    <property type="project" value="UniProtKB-EC"/>
</dbReference>
<dbReference type="GO" id="GO:0018189">
    <property type="term" value="P:pyrroloquinoline quinone biosynthetic process"/>
    <property type="evidence" value="ECO:0007669"/>
    <property type="project" value="UniProtKB-UniRule"/>
</dbReference>
<dbReference type="GO" id="GO:0006790">
    <property type="term" value="P:sulfur compound metabolic process"/>
    <property type="evidence" value="ECO:0007669"/>
    <property type="project" value="UniProtKB-ARBA"/>
</dbReference>
<dbReference type="CDD" id="cd19370">
    <property type="entry name" value="TenA_PqqC"/>
    <property type="match status" value="1"/>
</dbReference>
<dbReference type="Gene3D" id="1.20.910.10">
    <property type="entry name" value="Heme oxygenase-like"/>
    <property type="match status" value="1"/>
</dbReference>
<dbReference type="HAMAP" id="MF_00654">
    <property type="entry name" value="PQQ_syn_PqqC"/>
    <property type="match status" value="1"/>
</dbReference>
<dbReference type="InterPro" id="IPR016084">
    <property type="entry name" value="Haem_Oase-like_multi-hlx"/>
</dbReference>
<dbReference type="InterPro" id="IPR011845">
    <property type="entry name" value="PqqC"/>
</dbReference>
<dbReference type="InterPro" id="IPR039068">
    <property type="entry name" value="PqqC-like"/>
</dbReference>
<dbReference type="InterPro" id="IPR004305">
    <property type="entry name" value="Thiaminase-2/PQQC"/>
</dbReference>
<dbReference type="NCBIfam" id="TIGR02111">
    <property type="entry name" value="PQQ_syn_pqqC"/>
    <property type="match status" value="1"/>
</dbReference>
<dbReference type="PANTHER" id="PTHR40279:SF3">
    <property type="entry name" value="4-AMINOBENZOATE SYNTHASE"/>
    <property type="match status" value="1"/>
</dbReference>
<dbReference type="PANTHER" id="PTHR40279">
    <property type="entry name" value="PQQC-LIKE PROTEIN"/>
    <property type="match status" value="1"/>
</dbReference>
<dbReference type="Pfam" id="PF03070">
    <property type="entry name" value="TENA_THI-4"/>
    <property type="match status" value="1"/>
</dbReference>
<dbReference type="SUPFAM" id="SSF48613">
    <property type="entry name" value="Heme oxygenase-like"/>
    <property type="match status" value="1"/>
</dbReference>
<reference key="1">
    <citation type="journal article" date="2002" name="Environ. Microbiol.">
        <title>Complete genome sequence and comparative analysis of the metabolically versatile Pseudomonas putida KT2440.</title>
        <authorList>
            <person name="Nelson K.E."/>
            <person name="Weinel C."/>
            <person name="Paulsen I.T."/>
            <person name="Dodson R.J."/>
            <person name="Hilbert H."/>
            <person name="Martins dos Santos V.A.P."/>
            <person name="Fouts D.E."/>
            <person name="Gill S.R."/>
            <person name="Pop M."/>
            <person name="Holmes M."/>
            <person name="Brinkac L.M."/>
            <person name="Beanan M.J."/>
            <person name="DeBoy R.T."/>
            <person name="Daugherty S.C."/>
            <person name="Kolonay J.F."/>
            <person name="Madupu R."/>
            <person name="Nelson W.C."/>
            <person name="White O."/>
            <person name="Peterson J.D."/>
            <person name="Khouri H.M."/>
            <person name="Hance I."/>
            <person name="Chris Lee P."/>
            <person name="Holtzapple E.K."/>
            <person name="Scanlan D."/>
            <person name="Tran K."/>
            <person name="Moazzez A."/>
            <person name="Utterback T.R."/>
            <person name="Rizzo M."/>
            <person name="Lee K."/>
            <person name="Kosack D."/>
            <person name="Moestl D."/>
            <person name="Wedler H."/>
            <person name="Lauber J."/>
            <person name="Stjepandic D."/>
            <person name="Hoheisel J."/>
            <person name="Straetz M."/>
            <person name="Heim S."/>
            <person name="Kiewitz C."/>
            <person name="Eisen J.A."/>
            <person name="Timmis K.N."/>
            <person name="Duesterhoeft A."/>
            <person name="Tuemmler B."/>
            <person name="Fraser C.M."/>
        </authorList>
    </citation>
    <scope>NUCLEOTIDE SEQUENCE [LARGE SCALE GENOMIC DNA]</scope>
    <source>
        <strain>ATCC 47054 / DSM 6125 / CFBP 8728 / NCIMB 11950 / KT2440</strain>
    </source>
</reference>
<keyword id="KW-0560">Oxidoreductase</keyword>
<keyword id="KW-0884">PQQ biosynthesis</keyword>
<keyword id="KW-1185">Reference proteome</keyword>